<feature type="chain" id="PRO_1000073438" description="Large ribosomal subunit protein bL17">
    <location>
        <begin position="1"/>
        <end position="128"/>
    </location>
</feature>
<gene>
    <name evidence="1" type="primary">rplQ</name>
    <name type="ordered locus">VC0395_A2148</name>
    <name type="ordered locus">VC395_2683</name>
</gene>
<dbReference type="EMBL" id="CP000627">
    <property type="protein sequence ID" value="ABQ21338.1"/>
    <property type="molecule type" value="Genomic_DNA"/>
</dbReference>
<dbReference type="EMBL" id="CP001235">
    <property type="protein sequence ID" value="ACP10669.1"/>
    <property type="molecule type" value="Genomic_DNA"/>
</dbReference>
<dbReference type="RefSeq" id="WP_001216360.1">
    <property type="nucleotide sequence ID" value="NZ_JAACZH010000007.1"/>
</dbReference>
<dbReference type="SMR" id="A5F571"/>
<dbReference type="GeneID" id="94012778"/>
<dbReference type="KEGG" id="vco:VC0395_A2148"/>
<dbReference type="KEGG" id="vcr:VC395_2683"/>
<dbReference type="PATRIC" id="fig|345073.21.peg.2583"/>
<dbReference type="eggNOG" id="COG0203">
    <property type="taxonomic scope" value="Bacteria"/>
</dbReference>
<dbReference type="HOGENOM" id="CLU_074407_2_0_6"/>
<dbReference type="OrthoDB" id="9809073at2"/>
<dbReference type="Proteomes" id="UP000000249">
    <property type="component" value="Chromosome 2"/>
</dbReference>
<dbReference type="GO" id="GO:0022625">
    <property type="term" value="C:cytosolic large ribosomal subunit"/>
    <property type="evidence" value="ECO:0007669"/>
    <property type="project" value="TreeGrafter"/>
</dbReference>
<dbReference type="GO" id="GO:0003735">
    <property type="term" value="F:structural constituent of ribosome"/>
    <property type="evidence" value="ECO:0007669"/>
    <property type="project" value="InterPro"/>
</dbReference>
<dbReference type="GO" id="GO:0006412">
    <property type="term" value="P:translation"/>
    <property type="evidence" value="ECO:0007669"/>
    <property type="project" value="UniProtKB-UniRule"/>
</dbReference>
<dbReference type="FunFam" id="3.90.1030.10:FF:000001">
    <property type="entry name" value="50S ribosomal protein L17"/>
    <property type="match status" value="1"/>
</dbReference>
<dbReference type="Gene3D" id="3.90.1030.10">
    <property type="entry name" value="Ribosomal protein L17"/>
    <property type="match status" value="1"/>
</dbReference>
<dbReference type="HAMAP" id="MF_01368">
    <property type="entry name" value="Ribosomal_bL17"/>
    <property type="match status" value="1"/>
</dbReference>
<dbReference type="InterPro" id="IPR000456">
    <property type="entry name" value="Ribosomal_bL17"/>
</dbReference>
<dbReference type="InterPro" id="IPR047859">
    <property type="entry name" value="Ribosomal_bL17_CS"/>
</dbReference>
<dbReference type="InterPro" id="IPR036373">
    <property type="entry name" value="Ribosomal_bL17_sf"/>
</dbReference>
<dbReference type="NCBIfam" id="TIGR00059">
    <property type="entry name" value="L17"/>
    <property type="match status" value="1"/>
</dbReference>
<dbReference type="PANTHER" id="PTHR14413:SF16">
    <property type="entry name" value="LARGE RIBOSOMAL SUBUNIT PROTEIN BL17M"/>
    <property type="match status" value="1"/>
</dbReference>
<dbReference type="PANTHER" id="PTHR14413">
    <property type="entry name" value="RIBOSOMAL PROTEIN L17"/>
    <property type="match status" value="1"/>
</dbReference>
<dbReference type="Pfam" id="PF01196">
    <property type="entry name" value="Ribosomal_L17"/>
    <property type="match status" value="1"/>
</dbReference>
<dbReference type="SUPFAM" id="SSF64263">
    <property type="entry name" value="Prokaryotic ribosomal protein L17"/>
    <property type="match status" value="1"/>
</dbReference>
<dbReference type="PROSITE" id="PS01167">
    <property type="entry name" value="RIBOSOMAL_L17"/>
    <property type="match status" value="1"/>
</dbReference>
<sequence>MRHRKSGRQLNRNSSHRKAMFSNMASSLVRHEVIKTTLPKAKELRRVVEPLITLAKTDSVANRRLAFARTRDNEVVAKLFNELGPRFAARQGGYTRILKCGFRAGDKAPMAYIELVDRPEAAVEAAAE</sequence>
<keyword id="KW-0687">Ribonucleoprotein</keyword>
<keyword id="KW-0689">Ribosomal protein</keyword>
<proteinExistence type="inferred from homology"/>
<protein>
    <recommendedName>
        <fullName evidence="1">Large ribosomal subunit protein bL17</fullName>
    </recommendedName>
    <alternativeName>
        <fullName evidence="2">50S ribosomal protein L17</fullName>
    </alternativeName>
</protein>
<name>RL17_VIBC3</name>
<reference key="1">
    <citation type="submission" date="2007-03" db="EMBL/GenBank/DDBJ databases">
        <authorList>
            <person name="Heidelberg J."/>
        </authorList>
    </citation>
    <scope>NUCLEOTIDE SEQUENCE [LARGE SCALE GENOMIC DNA]</scope>
    <source>
        <strain>ATCC 39541 / Classical Ogawa 395 / O395</strain>
    </source>
</reference>
<reference key="2">
    <citation type="journal article" date="2008" name="PLoS ONE">
        <title>A recalibrated molecular clock and independent origins for the cholera pandemic clones.</title>
        <authorList>
            <person name="Feng L."/>
            <person name="Reeves P.R."/>
            <person name="Lan R."/>
            <person name="Ren Y."/>
            <person name="Gao C."/>
            <person name="Zhou Z."/>
            <person name="Ren Y."/>
            <person name="Cheng J."/>
            <person name="Wang W."/>
            <person name="Wang J."/>
            <person name="Qian W."/>
            <person name="Li D."/>
            <person name="Wang L."/>
        </authorList>
    </citation>
    <scope>NUCLEOTIDE SEQUENCE [LARGE SCALE GENOMIC DNA]</scope>
    <source>
        <strain>ATCC 39541 / Classical Ogawa 395 / O395</strain>
    </source>
</reference>
<organism>
    <name type="scientific">Vibrio cholerae serotype O1 (strain ATCC 39541 / Classical Ogawa 395 / O395)</name>
    <dbReference type="NCBI Taxonomy" id="345073"/>
    <lineage>
        <taxon>Bacteria</taxon>
        <taxon>Pseudomonadati</taxon>
        <taxon>Pseudomonadota</taxon>
        <taxon>Gammaproteobacteria</taxon>
        <taxon>Vibrionales</taxon>
        <taxon>Vibrionaceae</taxon>
        <taxon>Vibrio</taxon>
    </lineage>
</organism>
<evidence type="ECO:0000255" key="1">
    <source>
        <dbReference type="HAMAP-Rule" id="MF_01368"/>
    </source>
</evidence>
<evidence type="ECO:0000305" key="2"/>
<comment type="subunit">
    <text evidence="1">Part of the 50S ribosomal subunit. Contacts protein L32.</text>
</comment>
<comment type="similarity">
    <text evidence="1">Belongs to the bacterial ribosomal protein bL17 family.</text>
</comment>
<accession>A5F571</accession>
<accession>C3LXG9</accession>